<organism>
    <name type="scientific">Cavia porcellus</name>
    <name type="common">Guinea pig</name>
    <dbReference type="NCBI Taxonomy" id="10141"/>
    <lineage>
        <taxon>Eukaryota</taxon>
        <taxon>Metazoa</taxon>
        <taxon>Chordata</taxon>
        <taxon>Craniata</taxon>
        <taxon>Vertebrata</taxon>
        <taxon>Euteleostomi</taxon>
        <taxon>Mammalia</taxon>
        <taxon>Eutheria</taxon>
        <taxon>Euarchontoglires</taxon>
        <taxon>Glires</taxon>
        <taxon>Rodentia</taxon>
        <taxon>Hystricomorpha</taxon>
        <taxon>Caviidae</taxon>
        <taxon>Cavia</taxon>
    </lineage>
</organism>
<gene>
    <name type="primary">ITGB6</name>
</gene>
<accession>P18563</accession>
<accession>H0W6I6</accession>
<comment type="function">
    <text evidence="2 3">Integrin alpha-V:beta-6 (ITGAV:ITGB6) is a receptor for fibronectin and cytotactin (By similarity). It recognizes the sequence R-G-D in its ligands (By similarity). ITGAV:ITGB6 acts as a receptor for fibrillin-1 (FBN1) and mediates R-G-D-dependent cell adhesion to FBN1 (By similarity). Integrin alpha-V:beta-6 (ITGAV:ITGB6) mediates R-G-D-dependent release of transforming growth factor beta-1 (TGF-beta-1) from regulatory Latency-associated peptide (LAP), thereby playing a key role in TGF-beta-1 activation (By similarity).</text>
</comment>
<comment type="subunit">
    <text evidence="2 3">Heterodimer of an alpha and a beta subunit (By similarity). Interacts with FLNB. Interacts with HAX1. ITGAV:ITGB6 interacts with FBN1 (By similarity). ITGAV:ITGB6 interacts with TGFB1 (By similarity).</text>
</comment>
<comment type="subcellular location">
    <subcellularLocation>
        <location evidence="2">Cell membrane</location>
        <topology evidence="2">Single-pass type I membrane protein</topology>
    </subcellularLocation>
    <subcellularLocation>
        <location evidence="2">Cell junction</location>
        <location evidence="2">Focal adhesion</location>
    </subcellularLocation>
</comment>
<comment type="domain">
    <text evidence="1">The VWFA domain (or beta I domain) contains three cation-binding sites: the ligand-associated metal ion-binding site (LIMBS or SyMBS), the metal ion-dependent adhesion site (MIDAS), and the adjacent MIDAS site (ADMIDAS). This domain is also part of the ligand-binding site.</text>
</comment>
<comment type="similarity">
    <text evidence="6">Belongs to the integrin beta chain family.</text>
</comment>
<protein>
    <recommendedName>
        <fullName>Integrin beta-6</fullName>
    </recommendedName>
</protein>
<dbReference type="EMBL" id="M35197">
    <property type="protein sequence ID" value="AAA37043.1"/>
    <property type="molecule type" value="mRNA"/>
</dbReference>
<dbReference type="EMBL" id="AAKN02005906">
    <property type="status" value="NOT_ANNOTATED_CDS"/>
    <property type="molecule type" value="Genomic_DNA"/>
</dbReference>
<dbReference type="EMBL" id="AAKN02005907">
    <property type="status" value="NOT_ANNOTATED_CDS"/>
    <property type="molecule type" value="Genomic_DNA"/>
</dbReference>
<dbReference type="EMBL" id="AAKN02005908">
    <property type="status" value="NOT_ANNOTATED_CDS"/>
    <property type="molecule type" value="Genomic_DNA"/>
</dbReference>
<dbReference type="EMBL" id="AAKN02005909">
    <property type="status" value="NOT_ANNOTATED_CDS"/>
    <property type="molecule type" value="Genomic_DNA"/>
</dbReference>
<dbReference type="PIR" id="B37057">
    <property type="entry name" value="B37057"/>
</dbReference>
<dbReference type="RefSeq" id="XP_003478725.1">
    <property type="nucleotide sequence ID" value="XM_003478677.2"/>
</dbReference>
<dbReference type="RefSeq" id="XP_012997891.1">
    <property type="nucleotide sequence ID" value="XM_013142437.1"/>
</dbReference>
<dbReference type="RefSeq" id="XP_012997892.1">
    <property type="nucleotide sequence ID" value="XM_013142438.1"/>
</dbReference>
<dbReference type="SMR" id="P18563"/>
<dbReference type="STRING" id="10141.ENSCPOP00000018590"/>
<dbReference type="GlyCosmos" id="P18563">
    <property type="glycosylation" value="9 sites, No reported glycans"/>
</dbReference>
<dbReference type="Ensembl" id="ENSCPOT00000024774.2">
    <property type="protein sequence ID" value="ENSCPOP00000018590.2"/>
    <property type="gene ID" value="ENSCPOG00000012302.4"/>
</dbReference>
<dbReference type="GeneID" id="100718631"/>
<dbReference type="KEGG" id="cpoc:100718631"/>
<dbReference type="CTD" id="3694"/>
<dbReference type="VEuPathDB" id="HostDB:ENSCPOG00000012302"/>
<dbReference type="eggNOG" id="KOG1226">
    <property type="taxonomic scope" value="Eukaryota"/>
</dbReference>
<dbReference type="GeneTree" id="ENSGT01110000267169"/>
<dbReference type="HOGENOM" id="CLU_011772_0_1_1"/>
<dbReference type="InParanoid" id="P18563"/>
<dbReference type="OMA" id="WIYTVEG"/>
<dbReference type="OrthoDB" id="410592at2759"/>
<dbReference type="Proteomes" id="UP000005447">
    <property type="component" value="Unassembled WGS sequence"/>
</dbReference>
<dbReference type="Bgee" id="ENSCPOG00000012302">
    <property type="expression patterns" value="Expressed in thyroid gland and 7 other cell types or tissues"/>
</dbReference>
<dbReference type="GO" id="GO:0009897">
    <property type="term" value="C:external side of plasma membrane"/>
    <property type="evidence" value="ECO:0007669"/>
    <property type="project" value="Ensembl"/>
</dbReference>
<dbReference type="GO" id="GO:0005925">
    <property type="term" value="C:focal adhesion"/>
    <property type="evidence" value="ECO:0000250"/>
    <property type="project" value="UniProtKB"/>
</dbReference>
<dbReference type="GO" id="GO:0034685">
    <property type="term" value="C:integrin alphav-beta6 complex"/>
    <property type="evidence" value="ECO:0000250"/>
    <property type="project" value="UniProtKB"/>
</dbReference>
<dbReference type="GO" id="GO:0005178">
    <property type="term" value="F:integrin binding"/>
    <property type="evidence" value="ECO:0007669"/>
    <property type="project" value="Ensembl"/>
</dbReference>
<dbReference type="GO" id="GO:0046872">
    <property type="term" value="F:metal ion binding"/>
    <property type="evidence" value="ECO:0007669"/>
    <property type="project" value="UniProtKB-KW"/>
</dbReference>
<dbReference type="GO" id="GO:0140677">
    <property type="term" value="F:molecular function activator activity"/>
    <property type="evidence" value="ECO:0007669"/>
    <property type="project" value="Ensembl"/>
</dbReference>
<dbReference type="GO" id="GO:0060348">
    <property type="term" value="P:bone development"/>
    <property type="evidence" value="ECO:0007669"/>
    <property type="project" value="Ensembl"/>
</dbReference>
<dbReference type="GO" id="GO:0060435">
    <property type="term" value="P:bronchiole development"/>
    <property type="evidence" value="ECO:0007669"/>
    <property type="project" value="Ensembl"/>
</dbReference>
<dbReference type="GO" id="GO:0033627">
    <property type="term" value="P:cell adhesion mediated by integrin"/>
    <property type="evidence" value="ECO:0000250"/>
    <property type="project" value="UniProtKB"/>
</dbReference>
<dbReference type="GO" id="GO:0016477">
    <property type="term" value="P:cell migration"/>
    <property type="evidence" value="ECO:0007669"/>
    <property type="project" value="TreeGrafter"/>
</dbReference>
<dbReference type="GO" id="GO:0000902">
    <property type="term" value="P:cell morphogenesis"/>
    <property type="evidence" value="ECO:0007669"/>
    <property type="project" value="Ensembl"/>
</dbReference>
<dbReference type="GO" id="GO:0098609">
    <property type="term" value="P:cell-cell adhesion"/>
    <property type="evidence" value="ECO:0007669"/>
    <property type="project" value="TreeGrafter"/>
</dbReference>
<dbReference type="GO" id="GO:0007160">
    <property type="term" value="P:cell-matrix adhesion"/>
    <property type="evidence" value="ECO:0007669"/>
    <property type="project" value="Ensembl"/>
</dbReference>
<dbReference type="GO" id="GO:0071479">
    <property type="term" value="P:cellular response to ionizing radiation"/>
    <property type="evidence" value="ECO:0007669"/>
    <property type="project" value="Ensembl"/>
</dbReference>
<dbReference type="GO" id="GO:0070166">
    <property type="term" value="P:enamel mineralization"/>
    <property type="evidence" value="ECO:0007669"/>
    <property type="project" value="Ensembl"/>
</dbReference>
<dbReference type="GO" id="GO:0060022">
    <property type="term" value="P:hard palate development"/>
    <property type="evidence" value="ECO:0007669"/>
    <property type="project" value="Ensembl"/>
</dbReference>
<dbReference type="GO" id="GO:0006955">
    <property type="term" value="P:immune response"/>
    <property type="evidence" value="ECO:0007669"/>
    <property type="project" value="Ensembl"/>
</dbReference>
<dbReference type="GO" id="GO:0006954">
    <property type="term" value="P:inflammatory response"/>
    <property type="evidence" value="ECO:0007669"/>
    <property type="project" value="Ensembl"/>
</dbReference>
<dbReference type="GO" id="GO:0007229">
    <property type="term" value="P:integrin-mediated signaling pathway"/>
    <property type="evidence" value="ECO:0007669"/>
    <property type="project" value="UniProtKB-KW"/>
</dbReference>
<dbReference type="GO" id="GO:0061520">
    <property type="term" value="P:Langerhans cell differentiation"/>
    <property type="evidence" value="ECO:0007669"/>
    <property type="project" value="Ensembl"/>
</dbReference>
<dbReference type="GO" id="GO:0048286">
    <property type="term" value="P:lung alveolus development"/>
    <property type="evidence" value="ECO:0007669"/>
    <property type="project" value="Ensembl"/>
</dbReference>
<dbReference type="GO" id="GO:0055091">
    <property type="term" value="P:phospholipid homeostasis"/>
    <property type="evidence" value="ECO:0007669"/>
    <property type="project" value="Ensembl"/>
</dbReference>
<dbReference type="GO" id="GO:0009615">
    <property type="term" value="P:response to virus"/>
    <property type="evidence" value="ECO:0007669"/>
    <property type="project" value="Ensembl"/>
</dbReference>
<dbReference type="GO" id="GO:0043588">
    <property type="term" value="P:skin development"/>
    <property type="evidence" value="ECO:0007669"/>
    <property type="project" value="Ensembl"/>
</dbReference>
<dbReference type="GO" id="GO:0043129">
    <property type="term" value="P:surfactant homeostasis"/>
    <property type="evidence" value="ECO:0007669"/>
    <property type="project" value="Ensembl"/>
</dbReference>
<dbReference type="GO" id="GO:0071604">
    <property type="term" value="P:transforming growth factor beta production"/>
    <property type="evidence" value="ECO:0007669"/>
    <property type="project" value="Ensembl"/>
</dbReference>
<dbReference type="GO" id="GO:0007179">
    <property type="term" value="P:transforming growth factor beta receptor signaling pathway"/>
    <property type="evidence" value="ECO:0007669"/>
    <property type="project" value="Ensembl"/>
</dbReference>
<dbReference type="GO" id="GO:0042060">
    <property type="term" value="P:wound healing"/>
    <property type="evidence" value="ECO:0007669"/>
    <property type="project" value="Ensembl"/>
</dbReference>
<dbReference type="CDD" id="cd00054">
    <property type="entry name" value="EGF_CA"/>
    <property type="match status" value="1"/>
</dbReference>
<dbReference type="FunFam" id="1.20.5.100:FF:000004">
    <property type="entry name" value="Integrin beta"/>
    <property type="match status" value="1"/>
</dbReference>
<dbReference type="FunFam" id="2.10.25.10:FF:000043">
    <property type="entry name" value="Integrin beta"/>
    <property type="match status" value="1"/>
</dbReference>
<dbReference type="FunFam" id="2.10.25.10:FF:000075">
    <property type="entry name" value="Integrin beta"/>
    <property type="match status" value="1"/>
</dbReference>
<dbReference type="FunFam" id="2.10.25.10:FF:000328">
    <property type="entry name" value="Integrin beta"/>
    <property type="match status" value="1"/>
</dbReference>
<dbReference type="FunFam" id="2.60.40.1510:FF:000021">
    <property type="entry name" value="Integrin beta"/>
    <property type="match status" value="1"/>
</dbReference>
<dbReference type="FunFam" id="3.30.1680.10:FF:000002">
    <property type="entry name" value="Integrin beta"/>
    <property type="match status" value="1"/>
</dbReference>
<dbReference type="FunFam" id="3.40.50.410:FF:000002">
    <property type="entry name" value="Integrin beta"/>
    <property type="match status" value="1"/>
</dbReference>
<dbReference type="FunFam" id="4.10.1240.30:FF:000004">
    <property type="entry name" value="Integrin beta"/>
    <property type="match status" value="1"/>
</dbReference>
<dbReference type="Gene3D" id="4.10.1240.30">
    <property type="match status" value="1"/>
</dbReference>
<dbReference type="Gene3D" id="1.20.5.100">
    <property type="entry name" value="Cytochrome c1, transmembrane anchor, C-terminal"/>
    <property type="match status" value="1"/>
</dbReference>
<dbReference type="Gene3D" id="2.10.25.10">
    <property type="entry name" value="Laminin"/>
    <property type="match status" value="4"/>
</dbReference>
<dbReference type="Gene3D" id="3.30.1680.10">
    <property type="entry name" value="ligand-binding face of the semaphorins, domain 2"/>
    <property type="match status" value="1"/>
</dbReference>
<dbReference type="Gene3D" id="2.60.40.1510">
    <property type="entry name" value="ntegrin, alpha v. Chain A, domain 3"/>
    <property type="match status" value="1"/>
</dbReference>
<dbReference type="Gene3D" id="3.40.50.410">
    <property type="entry name" value="von Willebrand factor, type A domain"/>
    <property type="match status" value="1"/>
</dbReference>
<dbReference type="InterPro" id="IPR013111">
    <property type="entry name" value="EGF_extracell"/>
</dbReference>
<dbReference type="InterPro" id="IPR040622">
    <property type="entry name" value="I-EGF_1"/>
</dbReference>
<dbReference type="InterPro" id="IPR033760">
    <property type="entry name" value="Integrin_beta_N"/>
</dbReference>
<dbReference type="InterPro" id="IPR015812">
    <property type="entry name" value="Integrin_bsu"/>
</dbReference>
<dbReference type="InterPro" id="IPR014836">
    <property type="entry name" value="Integrin_bsu_cyt_dom"/>
</dbReference>
<dbReference type="InterPro" id="IPR012896">
    <property type="entry name" value="Integrin_bsu_tail"/>
</dbReference>
<dbReference type="InterPro" id="IPR036349">
    <property type="entry name" value="Integrin_bsu_tail_dom_sf"/>
</dbReference>
<dbReference type="InterPro" id="IPR002369">
    <property type="entry name" value="Integrin_bsu_VWA"/>
</dbReference>
<dbReference type="InterPro" id="IPR032695">
    <property type="entry name" value="Integrin_dom_sf"/>
</dbReference>
<dbReference type="InterPro" id="IPR016201">
    <property type="entry name" value="PSI"/>
</dbReference>
<dbReference type="InterPro" id="IPR036465">
    <property type="entry name" value="vWFA_dom_sf"/>
</dbReference>
<dbReference type="PANTHER" id="PTHR10082">
    <property type="entry name" value="INTEGRIN BETA SUBUNIT"/>
    <property type="match status" value="1"/>
</dbReference>
<dbReference type="PANTHER" id="PTHR10082:SF11">
    <property type="entry name" value="INTEGRIN BETA-6"/>
    <property type="match status" value="1"/>
</dbReference>
<dbReference type="Pfam" id="PF07974">
    <property type="entry name" value="EGF_2"/>
    <property type="match status" value="1"/>
</dbReference>
<dbReference type="Pfam" id="PF23105">
    <property type="entry name" value="EGF_integrin"/>
    <property type="match status" value="1"/>
</dbReference>
<dbReference type="Pfam" id="PF18372">
    <property type="entry name" value="I-EGF_1"/>
    <property type="match status" value="1"/>
</dbReference>
<dbReference type="Pfam" id="PF08725">
    <property type="entry name" value="Integrin_b_cyt"/>
    <property type="match status" value="1"/>
</dbReference>
<dbReference type="Pfam" id="PF07965">
    <property type="entry name" value="Integrin_B_tail"/>
    <property type="match status" value="1"/>
</dbReference>
<dbReference type="Pfam" id="PF00362">
    <property type="entry name" value="Integrin_beta"/>
    <property type="match status" value="1"/>
</dbReference>
<dbReference type="Pfam" id="PF17205">
    <property type="entry name" value="PSI_integrin"/>
    <property type="match status" value="1"/>
</dbReference>
<dbReference type="PIRSF" id="PIRSF002512">
    <property type="entry name" value="Integrin_B"/>
    <property type="match status" value="1"/>
</dbReference>
<dbReference type="PRINTS" id="PR01186">
    <property type="entry name" value="INTEGRINB"/>
</dbReference>
<dbReference type="SMART" id="SM00187">
    <property type="entry name" value="INB"/>
    <property type="match status" value="1"/>
</dbReference>
<dbReference type="SMART" id="SM01241">
    <property type="entry name" value="Integrin_b_cyt"/>
    <property type="match status" value="1"/>
</dbReference>
<dbReference type="SMART" id="SM01242">
    <property type="entry name" value="Integrin_B_tail"/>
    <property type="match status" value="1"/>
</dbReference>
<dbReference type="SMART" id="SM00423">
    <property type="entry name" value="PSI"/>
    <property type="match status" value="1"/>
</dbReference>
<dbReference type="SUPFAM" id="SSF57196">
    <property type="entry name" value="EGF/Laminin"/>
    <property type="match status" value="2"/>
</dbReference>
<dbReference type="SUPFAM" id="SSF69687">
    <property type="entry name" value="Integrin beta tail domain"/>
    <property type="match status" value="1"/>
</dbReference>
<dbReference type="SUPFAM" id="SSF69179">
    <property type="entry name" value="Integrin domains"/>
    <property type="match status" value="2"/>
</dbReference>
<dbReference type="SUPFAM" id="SSF103575">
    <property type="entry name" value="Plexin repeat"/>
    <property type="match status" value="1"/>
</dbReference>
<dbReference type="SUPFAM" id="SSF53300">
    <property type="entry name" value="vWA-like"/>
    <property type="match status" value="1"/>
</dbReference>
<dbReference type="PROSITE" id="PS00022">
    <property type="entry name" value="EGF_1"/>
    <property type="match status" value="2"/>
</dbReference>
<dbReference type="PROSITE" id="PS01186">
    <property type="entry name" value="EGF_2"/>
    <property type="match status" value="1"/>
</dbReference>
<dbReference type="PROSITE" id="PS00243">
    <property type="entry name" value="I_EGF_1"/>
    <property type="match status" value="2"/>
</dbReference>
<dbReference type="PROSITE" id="PS52047">
    <property type="entry name" value="I_EGF_2"/>
    <property type="match status" value="4"/>
</dbReference>
<evidence type="ECO:0000250" key="1">
    <source>
        <dbReference type="UniProtKB" id="P05106"/>
    </source>
</evidence>
<evidence type="ECO:0000250" key="2">
    <source>
        <dbReference type="UniProtKB" id="P18564"/>
    </source>
</evidence>
<evidence type="ECO:0000250" key="3">
    <source>
        <dbReference type="UniProtKB" id="Q9Z0T9"/>
    </source>
</evidence>
<evidence type="ECO:0000255" key="4"/>
<evidence type="ECO:0000255" key="5">
    <source>
        <dbReference type="PROSITE-ProRule" id="PRU01392"/>
    </source>
</evidence>
<evidence type="ECO:0000305" key="6"/>
<evidence type="ECO:0000312" key="7">
    <source>
        <dbReference type="EMBL" id="AAA37043.1"/>
    </source>
</evidence>
<evidence type="ECO:0000312" key="8">
    <source>
        <dbReference type="Proteomes" id="UP000005447"/>
    </source>
</evidence>
<name>ITB6_CAVPO</name>
<feature type="signal peptide" evidence="4">
    <location>
        <begin position="1"/>
        <end position="21"/>
    </location>
</feature>
<feature type="chain" id="PRO_0000174223" description="Integrin beta-6">
    <location>
        <begin position="22"/>
        <end position="788"/>
    </location>
</feature>
<feature type="topological domain" description="Extracellular" evidence="6">
    <location>
        <begin position="22"/>
        <end position="709"/>
    </location>
</feature>
<feature type="transmembrane region" description="Helical" evidence="4">
    <location>
        <begin position="710"/>
        <end position="730"/>
    </location>
</feature>
<feature type="topological domain" description="Cytoplasmic" evidence="6">
    <location>
        <begin position="731"/>
        <end position="788"/>
    </location>
</feature>
<feature type="domain" description="PSI" evidence="4">
    <location>
        <begin position="22"/>
        <end position="71"/>
    </location>
</feature>
<feature type="domain" description="VWFA" evidence="1">
    <location>
        <begin position="131"/>
        <end position="371"/>
    </location>
</feature>
<feature type="domain" description="I-EGF 1" evidence="5">
    <location>
        <begin position="456"/>
        <end position="491"/>
    </location>
</feature>
<feature type="domain" description="I-EGF 2" evidence="5">
    <location>
        <begin position="492"/>
        <end position="538"/>
    </location>
</feature>
<feature type="domain" description="I-EGF 3" evidence="5">
    <location>
        <begin position="539"/>
        <end position="575"/>
    </location>
</feature>
<feature type="domain" description="I-EGF 4" evidence="5">
    <location>
        <begin position="576"/>
        <end position="615"/>
    </location>
</feature>
<feature type="region of interest" description="Interaction with HAX1" evidence="2">
    <location>
        <begin position="731"/>
        <end position="758"/>
    </location>
</feature>
<feature type="binding site" description="in MIDAS binding site" evidence="2">
    <location>
        <position position="140"/>
    </location>
    <ligand>
        <name>Mg(2+)</name>
        <dbReference type="ChEBI" id="CHEBI:18420"/>
    </ligand>
</feature>
<feature type="binding site" description="in MIDAS binding site" evidence="2">
    <location>
        <position position="142"/>
    </location>
    <ligand>
        <name>Mg(2+)</name>
        <dbReference type="ChEBI" id="CHEBI:18420"/>
    </ligand>
</feature>
<feature type="binding site" description="in ADMIDAS binding site" evidence="2">
    <location>
        <position position="144"/>
    </location>
    <ligand>
        <name>Ca(2+)</name>
        <dbReference type="ChEBI" id="CHEBI:29108"/>
        <label>1</label>
    </ligand>
</feature>
<feature type="binding site" description="in MIDAS binding site" evidence="1">
    <location>
        <position position="144"/>
    </location>
    <ligand>
        <name>Mg(2+)</name>
        <dbReference type="ChEBI" id="CHEBI:18420"/>
    </ligand>
</feature>
<feature type="binding site" description="in ADMIDAS binding site" evidence="2">
    <location>
        <position position="147"/>
    </location>
    <ligand>
        <name>Ca(2+)</name>
        <dbReference type="ChEBI" id="CHEBI:29108"/>
        <label>1</label>
    </ligand>
</feature>
<feature type="binding site" description="in ADMIDAS binding site" evidence="2">
    <location>
        <position position="148"/>
    </location>
    <ligand>
        <name>Ca(2+)</name>
        <dbReference type="ChEBI" id="CHEBI:29108"/>
        <label>1</label>
    </ligand>
</feature>
<feature type="binding site" description="in LIMBS binding site" evidence="2">
    <location>
        <position position="179"/>
    </location>
    <ligand>
        <name>Ca(2+)</name>
        <dbReference type="ChEBI" id="CHEBI:29108"/>
        <label>2</label>
    </ligand>
</feature>
<feature type="binding site" description="in LIMBS binding site" evidence="2">
    <location>
        <position position="235"/>
    </location>
    <ligand>
        <name>Ca(2+)</name>
        <dbReference type="ChEBI" id="CHEBI:29108"/>
        <label>2</label>
    </ligand>
</feature>
<feature type="binding site" description="in LIMBS binding site" evidence="2">
    <location>
        <position position="237"/>
    </location>
    <ligand>
        <name>Ca(2+)</name>
        <dbReference type="ChEBI" id="CHEBI:29108"/>
        <label>2</label>
    </ligand>
</feature>
<feature type="binding site" description="in LIMBS binding site" evidence="2">
    <location>
        <position position="239"/>
    </location>
    <ligand>
        <name>Ca(2+)</name>
        <dbReference type="ChEBI" id="CHEBI:29108"/>
        <label>2</label>
    </ligand>
</feature>
<feature type="binding site" description="in LIMBS binding site" evidence="2">
    <location>
        <position position="240"/>
    </location>
    <ligand>
        <name>Ca(2+)</name>
        <dbReference type="ChEBI" id="CHEBI:29108"/>
        <label>2</label>
    </ligand>
</feature>
<feature type="binding site" description="in MIDAS binding site" evidence="2">
    <location>
        <position position="240"/>
    </location>
    <ligand>
        <name>Mg(2+)</name>
        <dbReference type="ChEBI" id="CHEBI:18420"/>
    </ligand>
</feature>
<feature type="binding site" description="in ADMIDAS binding site and liganded-open conformation" evidence="1">
    <location>
        <position position="271"/>
    </location>
    <ligand>
        <name>Ca(2+)</name>
        <dbReference type="ChEBI" id="CHEBI:29108"/>
        <label>1</label>
    </ligand>
</feature>
<feature type="binding site" description="in ADMIDAS binding site and unliganded-closed conformation" evidence="2">
    <location>
        <position position="355"/>
    </location>
    <ligand>
        <name>Ca(2+)</name>
        <dbReference type="ChEBI" id="CHEBI:29108"/>
        <label>1</label>
    </ligand>
</feature>
<feature type="glycosylation site" description="N-linked (GlcNAc...) asparagine" evidence="4">
    <location>
        <position position="48"/>
    </location>
</feature>
<feature type="glycosylation site" description="N-linked (GlcNAc...) asparagine" evidence="4">
    <location>
        <position position="97"/>
    </location>
</feature>
<feature type="glycosylation site" description="N-linked (GlcNAc...) asparagine" evidence="4">
    <location>
        <position position="260"/>
    </location>
</feature>
<feature type="glycosylation site" description="N-linked (GlcNAc...) asparagine" evidence="4">
    <location>
        <position position="387"/>
    </location>
</feature>
<feature type="glycosylation site" description="N-linked (GlcNAc...) asparagine" evidence="4">
    <location>
        <position position="396"/>
    </location>
</feature>
<feature type="glycosylation site" description="N-linked (GlcNAc...) asparagine" evidence="4">
    <location>
        <position position="418"/>
    </location>
</feature>
<feature type="glycosylation site" description="N-linked (GlcNAc...) asparagine" evidence="4">
    <location>
        <position position="463"/>
    </location>
</feature>
<feature type="glycosylation site" description="N-linked (GlcNAc...) asparagine" evidence="4">
    <location>
        <position position="471"/>
    </location>
</feature>
<feature type="glycosylation site" description="N-linked (GlcNAc...) asparagine" evidence="4">
    <location>
        <position position="541"/>
    </location>
</feature>
<feature type="glycosylation site" description="N-linked (GlcNAc...) asparagine" evidence="4">
    <location>
        <position position="575"/>
    </location>
</feature>
<feature type="glycosylation site" description="N-linked (GlcNAc...) asparagine" evidence="4">
    <location>
        <position position="696"/>
    </location>
</feature>
<feature type="disulfide bond" evidence="2">
    <location>
        <begin position="23"/>
        <end position="41"/>
    </location>
</feature>
<feature type="disulfide bond" evidence="2">
    <location>
        <begin position="31"/>
        <end position="454"/>
    </location>
</feature>
<feature type="disulfide bond" evidence="2">
    <location>
        <begin position="34"/>
        <end position="59"/>
    </location>
</feature>
<feature type="disulfide bond" evidence="2">
    <location>
        <begin position="44"/>
        <end position="70"/>
    </location>
</feature>
<feature type="disulfide bond" evidence="2">
    <location>
        <begin position="197"/>
        <end position="204"/>
    </location>
</feature>
<feature type="disulfide bond" evidence="2">
    <location>
        <begin position="252"/>
        <end position="293"/>
    </location>
</feature>
<feature type="disulfide bond" evidence="2">
    <location>
        <begin position="394"/>
        <end position="406"/>
    </location>
</feature>
<feature type="disulfide bond" evidence="2">
    <location>
        <begin position="426"/>
        <end position="452"/>
    </location>
</feature>
<feature type="disulfide bond" evidence="5">
    <location>
        <begin position="456"/>
        <end position="476"/>
    </location>
</feature>
<feature type="disulfide bond" evidence="5">
    <location>
        <begin position="467"/>
        <end position="479"/>
    </location>
</feature>
<feature type="disulfide bond" evidence="5">
    <location>
        <begin position="481"/>
        <end position="490"/>
    </location>
</feature>
<feature type="disulfide bond" evidence="5">
    <location>
        <begin position="492"/>
        <end position="519"/>
    </location>
</feature>
<feature type="disulfide bond" evidence="5">
    <location>
        <begin position="502"/>
        <end position="517"/>
    </location>
</feature>
<feature type="disulfide bond" evidence="5">
    <location>
        <begin position="511"/>
        <end position="522"/>
    </location>
</feature>
<feature type="disulfide bond" evidence="5">
    <location>
        <begin position="524"/>
        <end position="537"/>
    </location>
</feature>
<feature type="disulfide bond" evidence="5">
    <location>
        <begin position="539"/>
        <end position="560"/>
    </location>
</feature>
<feature type="disulfide bond" evidence="5">
    <location>
        <begin position="544"/>
        <end position="558"/>
    </location>
</feature>
<feature type="disulfide bond" evidence="5">
    <location>
        <begin position="552"/>
        <end position="563"/>
    </location>
</feature>
<feature type="disulfide bond" evidence="5">
    <location>
        <begin position="565"/>
        <end position="574"/>
    </location>
</feature>
<feature type="disulfide bond" evidence="5">
    <location>
        <begin position="576"/>
        <end position="599"/>
    </location>
</feature>
<feature type="disulfide bond" evidence="5">
    <location>
        <begin position="583"/>
        <end position="597"/>
    </location>
</feature>
<feature type="disulfide bond" evidence="5">
    <location>
        <begin position="591"/>
        <end position="602"/>
    </location>
</feature>
<feature type="disulfide bond" evidence="5">
    <location>
        <begin position="604"/>
        <end position="614"/>
    </location>
</feature>
<feature type="disulfide bond" evidence="1">
    <location>
        <begin position="617"/>
        <end position="620"/>
    </location>
</feature>
<feature type="disulfide bond" evidence="1">
    <location>
        <begin position="624"/>
        <end position="670"/>
    </location>
</feature>
<feature type="disulfide bond" evidence="1">
    <location>
        <begin position="630"/>
        <end position="649"/>
    </location>
</feature>
<feature type="disulfide bond" evidence="1">
    <location>
        <begin position="633"/>
        <end position="645"/>
    </location>
</feature>
<feature type="disulfide bond" evidence="1">
    <location>
        <begin position="678"/>
        <end position="702"/>
    </location>
</feature>
<feature type="sequence conflict" description="In Ref. 2; AAA37043." evidence="6" ref="2">
    <original>T</original>
    <variation>N</variation>
    <location>
        <position position="238"/>
    </location>
</feature>
<feature type="sequence conflict" description="In Ref. 2; AAA37043." evidence="6" ref="2">
    <original>T</original>
    <variation>S</variation>
    <location>
        <position position="391"/>
    </location>
</feature>
<proteinExistence type="evidence at transcript level"/>
<sequence length="788" mass="86011">MGIELLCFFFLFLGRDDHVRGGCAMEGAETCGDCLLIGPQCAWCSQENFTHPSGVSERCDTPANLLAKGCQLTFIENPVSQVEILKNKPLSIGRQKNSSDIVQIAPQNLILKLRPGSEQTLQVQVRQTEDYPVDLYYLMDLSASMDDDLNTIKELGSLLSKEMSKLTSNFRLGFGSFVEKPVSPFMKTTPEEIANPCSSIPYICLPTFGFKHILPLTNDAERFNEIVKKQKISANIDTPEGGFDAIMQAAVCKEKIGWRNDSLHLLVFVSDADSHFGMDSKLAGIVIPNDGLCHLDSKNEYSMSTVMEYPTIGQLIDKVVQNNVLLIFAVTQEQVPLYENYAKLIPGATVGLLHKDSGNILQLIISAYEELRSEVELEVLGDTEGLNLSFTAVCNNGTLFPHQKKCLHMKVGETASFNVTVSIPNCERKSRHVIIKPVGLGDTLEILVSPECSCDCQKEVEVNSSKCHNGNGSYQCGVCACNPGHMGPHCECGEDTLSTDSCKETPDHPSCSGRGDCYCGQCICHLSPYGNIYGPYCQCDNFSCVRHKGLLCGDNGDCECGECVCRSGWTGEYCNCTTSTDTCISEDGTLCSGRGDCVCGKCVCTNPGASGPTCERCPTCSDPCNSKRSCIECHLSADGQPGEECVDKCKLAGVTISKEADFSKDSSVSCSLQGENECLITFLISTDNEGKTIIHNISEKDCPKPPNIPMIMLGVSLAILLIGVVLLCIWKLLVSFHDRKEVAKFEAERSKAKWQTGTNPLYRGSTSTFKNVTYKHRDKLKTDLSTDG</sequence>
<keyword id="KW-0106">Calcium</keyword>
<keyword id="KW-0130">Cell adhesion</keyword>
<keyword id="KW-0965">Cell junction</keyword>
<keyword id="KW-1003">Cell membrane</keyword>
<keyword id="KW-1015">Disulfide bond</keyword>
<keyword id="KW-0245">EGF-like domain</keyword>
<keyword id="KW-0325">Glycoprotein</keyword>
<keyword id="KW-0401">Integrin</keyword>
<keyword id="KW-0460">Magnesium</keyword>
<keyword id="KW-0472">Membrane</keyword>
<keyword id="KW-0479">Metal-binding</keyword>
<keyword id="KW-0675">Receptor</keyword>
<keyword id="KW-1185">Reference proteome</keyword>
<keyword id="KW-0677">Repeat</keyword>
<keyword id="KW-0732">Signal</keyword>
<keyword id="KW-0812">Transmembrane</keyword>
<keyword id="KW-1133">Transmembrane helix</keyword>
<reference evidence="8" key="1">
    <citation type="journal article" date="2011" name="Nature">
        <title>A high-resolution map of human evolutionary constraint using 29 mammals.</title>
        <authorList>
            <person name="Lindblad-Toh K."/>
            <person name="Garber M."/>
            <person name="Zuk O."/>
            <person name="Lin M.F."/>
            <person name="Parker B.J."/>
            <person name="Washietl S."/>
            <person name="Kheradpour P."/>
            <person name="Ernst J."/>
            <person name="Jordan G."/>
            <person name="Mauceli E."/>
            <person name="Ward L.D."/>
            <person name="Lowe C.B."/>
            <person name="Holloway A.K."/>
            <person name="Clamp M."/>
            <person name="Gnerre S."/>
            <person name="Alfoldi J."/>
            <person name="Beal K."/>
            <person name="Chang J."/>
            <person name="Clawson H."/>
            <person name="Cuff J."/>
            <person name="Di Palma F."/>
            <person name="Fitzgerald S."/>
            <person name="Flicek P."/>
            <person name="Guttman M."/>
            <person name="Hubisz M.J."/>
            <person name="Jaffe D.B."/>
            <person name="Jungreis I."/>
            <person name="Kent W.J."/>
            <person name="Kostka D."/>
            <person name="Lara M."/>
            <person name="Martins A.L."/>
            <person name="Massingham T."/>
            <person name="Moltke I."/>
            <person name="Raney B.J."/>
            <person name="Rasmussen M.D."/>
            <person name="Robinson J."/>
            <person name="Stark A."/>
            <person name="Vilella A.J."/>
            <person name="Wen J."/>
            <person name="Xie X."/>
            <person name="Zody M.C."/>
            <person name="Baldwin J."/>
            <person name="Bloom T."/>
            <person name="Chin C.W."/>
            <person name="Heiman D."/>
            <person name="Nicol R."/>
            <person name="Nusbaum C."/>
            <person name="Young S."/>
            <person name="Wilkinson J."/>
            <person name="Worley K.C."/>
            <person name="Kovar C.L."/>
            <person name="Muzny D.M."/>
            <person name="Gibbs R.A."/>
            <person name="Cree A."/>
            <person name="Dihn H.H."/>
            <person name="Fowler G."/>
            <person name="Jhangiani S."/>
            <person name="Joshi V."/>
            <person name="Lee S."/>
            <person name="Lewis L.R."/>
            <person name="Nazareth L.V."/>
            <person name="Okwuonu G."/>
            <person name="Santibanez J."/>
            <person name="Warren W.C."/>
            <person name="Mardis E.R."/>
            <person name="Weinstock G.M."/>
            <person name="Wilson R.K."/>
            <person name="Delehaunty K."/>
            <person name="Dooling D."/>
            <person name="Fronik C."/>
            <person name="Fulton L."/>
            <person name="Fulton B."/>
            <person name="Graves T."/>
            <person name="Minx P."/>
            <person name="Sodergren E."/>
            <person name="Birney E."/>
            <person name="Margulies E.H."/>
            <person name="Herrero J."/>
            <person name="Green E.D."/>
            <person name="Haussler D."/>
            <person name="Siepel A."/>
            <person name="Goldman N."/>
            <person name="Pollard K.S."/>
            <person name="Pedersen J.S."/>
            <person name="Lander E.S."/>
            <person name="Kellis M."/>
        </authorList>
    </citation>
    <scope>NUCLEOTIDE SEQUENCE [LARGE SCALE GENOMIC DNA] OF 142-718</scope>
    <source>
        <strain evidence="8">2N</strain>
    </source>
</reference>
<reference evidence="7" key="2">
    <citation type="journal article" date="1990" name="J. Biol. Chem.">
        <title>Complete amino acid sequence of a novel integrin beta subunit (beta 6) identified in epithelial cells using the polymerase chain reaction.</title>
        <authorList>
            <person name="Sheppard D."/>
            <person name="Rozzo C."/>
            <person name="Starr L."/>
            <person name="Quaranta V."/>
            <person name="Erle D.J."/>
            <person name="Pytela R."/>
        </authorList>
    </citation>
    <scope>NUCLEOTIDE SEQUENCE [MRNA] OF 142-718</scope>
    <source>
        <strain>Hartley</strain>
    </source>
</reference>